<evidence type="ECO:0000250" key="1">
    <source>
        <dbReference type="UniProtKB" id="Q969B0"/>
    </source>
</evidence>
<evidence type="ECO:0000255" key="2">
    <source>
        <dbReference type="PROSITE-ProRule" id="PRU00184"/>
    </source>
</evidence>
<evidence type="ECO:0000255" key="3">
    <source>
        <dbReference type="PROSITE-ProRule" id="PRU00283"/>
    </source>
</evidence>
<evidence type="ECO:0000256" key="4">
    <source>
        <dbReference type="SAM" id="MobiDB-lite"/>
    </source>
</evidence>
<evidence type="ECO:0000269" key="5">
    <source>
    </source>
</evidence>
<evidence type="ECO:0000269" key="6">
    <source>
    </source>
</evidence>
<evidence type="ECO:0000269" key="7">
    <source>
    </source>
</evidence>
<evidence type="ECO:0000303" key="8">
    <source>
    </source>
</evidence>
<evidence type="ECO:0000303" key="9">
    <source>
    </source>
</evidence>
<evidence type="ECO:0000303" key="10">
    <source>
    </source>
</evidence>
<evidence type="ECO:0000305" key="11"/>
<evidence type="ECO:0000312" key="12">
    <source>
        <dbReference type="EMBL" id="ABD60079.1"/>
    </source>
</evidence>
<evidence type="ECO:0000312" key="13">
    <source>
        <dbReference type="EMBL" id="EDO82285.1"/>
    </source>
</evidence>
<evidence type="ECO:0000312" key="14">
    <source>
        <dbReference type="EMBL" id="KAE8302965.1"/>
    </source>
</evidence>
<evidence type="ECO:0000312" key="15">
    <source>
        <dbReference type="Proteomes" id="UP000001548"/>
    </source>
</evidence>
<reference evidence="12" key="1">
    <citation type="journal article" date="2007" name="Eukaryot. Cell">
        <title>Kinesin-13 regulates flagellar, interphase, and mitotic microtubule dynamics in Giardia intestinalis.</title>
        <authorList>
            <person name="Dawson S.C."/>
            <person name="Sagolla M.S."/>
            <person name="Mancuso J.J."/>
            <person name="Woessner D.J."/>
            <person name="House S.A."/>
            <person name="Fritz-Laylin L."/>
            <person name="Cande W.Z."/>
        </authorList>
    </citation>
    <scope>NUCLEOTIDE SEQUENCE [GENOMIC DNA]</scope>
    <scope>FUNCTION</scope>
    <scope>SUBCELLULAR LOCATION</scope>
    <scope>MUTAGENESIS OF SER-280</scope>
    <source>
        <strain evidence="8">ATCC 50803 / WB clone C6</strain>
    </source>
</reference>
<reference evidence="13 15" key="2">
    <citation type="journal article" date="2007" name="Science">
        <title>Genomic minimalism in the early diverging intestinal parasite Giardia lamblia.</title>
        <authorList>
            <person name="Morrison H.G."/>
            <person name="McArthur A.G."/>
            <person name="Gillin F.D."/>
            <person name="Aley S.B."/>
            <person name="Adam R.D."/>
            <person name="Olsen G.J."/>
            <person name="Best A.A."/>
            <person name="Cande W.Z."/>
            <person name="Chen F."/>
            <person name="Cipriano M.J."/>
            <person name="Davids B.J."/>
            <person name="Dawson S.C."/>
            <person name="Elmendorf H.G."/>
            <person name="Hehl A.B."/>
            <person name="Holder M.E."/>
            <person name="Huse S.M."/>
            <person name="Kim U.U."/>
            <person name="Lasek-Nesselquist E."/>
            <person name="Manning G."/>
            <person name="Nigam A."/>
            <person name="Nixon J.E.J."/>
            <person name="Palm D."/>
            <person name="Passamaneck N.E."/>
            <person name="Prabhu A."/>
            <person name="Reich C.I."/>
            <person name="Reiner D.S."/>
            <person name="Samuelson J."/>
            <person name="Svard S.G."/>
            <person name="Sogin M.L."/>
        </authorList>
    </citation>
    <scope>NUCLEOTIDE SEQUENCE [LARGE SCALE GENOMIC DNA]</scope>
    <source>
        <strain evidence="15">ATCC 50803 / WB clone C6</strain>
    </source>
</reference>
<reference evidence="14" key="3">
    <citation type="submission" date="2019-07" db="EMBL/GenBank/DDBJ databases">
        <title>New Giardia intestinalis WB genome in near-complete chromosomes.</title>
        <authorList>
            <person name="Xu F."/>
            <person name="Jex A."/>
            <person name="Svard S.G."/>
        </authorList>
    </citation>
    <scope>NUCLEOTIDE SEQUENCE [LARGE SCALE GENOMIC DNA]</scope>
    <source>
        <strain evidence="14">ATCC 50803 / WB clone C6</strain>
    </source>
</reference>
<reference key="4">
    <citation type="journal article" date="2019" name="Elife">
        <title>Length-dependent disassembly maintains four different flagellar lengths in Giardia.</title>
        <authorList>
            <person name="McInally S.G."/>
            <person name="Kondev J."/>
            <person name="Dawson S.C."/>
        </authorList>
    </citation>
    <scope>FUNCTION</scope>
    <scope>SUBCELLULAR LOCATION</scope>
    <scope>DISRUPTION PHENOTYPE</scope>
    <source>
        <strain evidence="10">ATCC 50803 / WB clone C6</strain>
    </source>
</reference>
<reference key="5">
    <citation type="journal article" date="2019" name="Mol. Biol. Cell">
        <title>Robust and stable transcriptional repression in Giardia using CRISPRi.</title>
        <authorList>
            <person name="McInally S.G."/>
            <person name="Hagen K.D."/>
            <person name="Nosala C."/>
            <person name="Williams J."/>
            <person name="Nguyen K."/>
            <person name="Booker J."/>
            <person name="Jones K."/>
            <person name="Dawson S.C."/>
        </authorList>
    </citation>
    <scope>DISRUPTION PHENOTYPE</scope>
    <source>
        <strain evidence="9">ATCC 50803 / WB clone C6</strain>
    </source>
</reference>
<feature type="chain" id="PRO_0000459163" description="Kinesin-like protein KIN-13">
    <location>
        <begin position="1"/>
        <end position="714"/>
    </location>
</feature>
<feature type="domain" description="SAM" evidence="2">
    <location>
        <begin position="1"/>
        <end position="63"/>
    </location>
</feature>
<feature type="domain" description="Kinesin motor" evidence="3">
    <location>
        <begin position="183"/>
        <end position="515"/>
    </location>
</feature>
<feature type="region of interest" description="Disordered" evidence="4">
    <location>
        <begin position="69"/>
        <end position="109"/>
    </location>
</feature>
<feature type="region of interest" description="Disordered" evidence="4">
    <location>
        <begin position="122"/>
        <end position="161"/>
    </location>
</feature>
<feature type="compositionally biased region" description="Polar residues" evidence="4">
    <location>
        <begin position="69"/>
        <end position="81"/>
    </location>
</feature>
<feature type="compositionally biased region" description="Low complexity" evidence="4">
    <location>
        <begin position="82"/>
        <end position="92"/>
    </location>
</feature>
<feature type="compositionally biased region" description="Pro residues" evidence="4">
    <location>
        <begin position="151"/>
        <end position="160"/>
    </location>
</feature>
<feature type="binding site" evidence="3">
    <location>
        <begin position="273"/>
        <end position="280"/>
    </location>
    <ligand>
        <name>ATP</name>
        <dbReference type="ChEBI" id="CHEBI:30616"/>
    </ligand>
</feature>
<feature type="mutagenesis site" description="Increased length of flagellar axonemes, in particular of the caudal flagellar axoneme from the exit point to the tip. Thickened or stretched distal tips of the axonemes. Significant length elongation of all eight flagella. Significantly decreased volumes of the median bodies. Distorted cell shape in interphase. Significantly increased length of the median body in early mitosis remaining throughout mitosis into cytokinesis, leading to severe cytokinesis defects. Aberrant positioning of the median body. No effect on localization to single spots on chromosomes during mitosis, however, mitotic cells have defects including spindle defects and lagging anaphase chromosomes." evidence="5">
    <original>S</original>
    <variation>N</variation>
    <location>
        <position position="280"/>
    </location>
</feature>
<protein>
    <recommendedName>
        <fullName evidence="11">Kinesin-like protein KIN-13</fullName>
    </recommendedName>
    <alternativeName>
        <fullName evidence="11">GlKin-13</fullName>
    </alternativeName>
    <alternativeName>
        <fullName evidence="8 10">Kinesin-13</fullName>
    </alternativeName>
    <alternativeName>
        <fullName evidence="8">Plus-end tracking protein kinesin-13</fullName>
        <shortName evidence="8">+TIP kinesin-13</shortName>
    </alternativeName>
</protein>
<comment type="function">
    <text evidence="1 5 7">Involved in cell cycle (PubMed:17766466). Involved in formation of flagella, regulation of flagellar length, and formation of median bodies during interphase (By similarity). Regulates flagellar length in all eight distal flagellar tips by promoting disassembly of the microtubules (PubMed:17766466, PubMed:31855176). Disassembles microtubules at the distal flagellar tips in a length-dependent manner in order to maintain different equilibrium lengths of the four flagellar pairs (PubMed:31855176). Regulates interphase and mitotic microtubule dynamics (PubMed:17766466). Regulates microtubule disassembly dynamics of the dual mitotic spindles and the median body (PubMed:17766466).</text>
</comment>
<comment type="subunit">
    <text evidence="1">Interacts with PLK.</text>
</comment>
<comment type="subcellular location">
    <subcellularLocation>
        <location evidence="5 7">Cytoplasm</location>
        <location evidence="5 7">Cytoskeleton</location>
    </subcellularLocation>
    <subcellularLocation>
        <location evidence="5 7">Cell projection</location>
        <location evidence="5 7">Cilium</location>
        <location evidence="5 7">Flagellum</location>
    </subcellularLocation>
    <subcellularLocation>
        <location evidence="1">Cytoplasm</location>
        <location evidence="1">Cytoskeleton</location>
        <location evidence="1">Flagellum basal body</location>
    </subcellularLocation>
    <subcellularLocation>
        <location evidence="5 7">Cytoplasm</location>
        <location evidence="5 7">Cytoskeleton</location>
        <location evidence="5 7">Flagellum axoneme</location>
    </subcellularLocation>
    <subcellularLocation>
        <location evidence="5">Cytoplasm</location>
        <location evidence="5">Cytoskeleton</location>
        <location evidence="5">Spindle</location>
    </subcellularLocation>
    <subcellularLocation>
        <location evidence="5">Chromosome</location>
        <location evidence="5">Centromere</location>
        <location evidence="5">Kinetochore</location>
    </subcellularLocation>
    <text evidence="1 5 7">Localizes and accumulates in a length-dependent manner to the distal regions of flagellar tips (PubMed:31855176). Amount at the distal flagellar tip increases during de novo assembly possibly as a consequence of its transport along the flagellum (PubMed:31855176). More of it is present in the caudal flagellar tips than in the longer anterior flagellar tips (PubMed:31855176). Amount decreases sharply immediately proximal to the flagellar tip indicating that it does not undergo directed retrograde transport on the axoneme, but likely diffuses from the flagella tip toward the base (PubMed:31855176). During diffusion, it may be recaptured by anterograde intraflagellar transport (IFT) trains to sequester it to the tip region (PubMed:31855176). Localizes to basal bodies in interphase (By similarity). Localizes uniformly to the median body and unevenly at distinct regions of all eight flagella, primarily localizing to the distal flagellar tips, in interphase (PubMed:17766466, PubMed:31855176). Localizes to the cytoplasmic axonemes in interphase (PubMed:17766466, PubMed:31855176). Localizes to the ventral disk in interphase (PubMed:31855176). Localizes to the plus ends of interphase and mitotic microtubules (PubMed:17766466). Localizes to single spots on chromosomes during mitosis (PubMed:17766466). Localizes to the plus ends of microtubules and kinetochores in anaphase spindles (PubMed:17766466). Localizes to the growing flagellar tips of the posterolateral and ventral axonemes during mitotic telophase (PubMed:17766466). Also localizes to kinetochores during flagellar duplication (PubMed:17766466).</text>
</comment>
<comment type="PTM">
    <text evidence="1">Phosphorylated by PLK.</text>
</comment>
<comment type="disruption phenotype">
    <text evidence="6 7">Knockdown of expression by CRISPR interference (CRISPRi) system results in steady-state length increases in all four flagellar pairs (PubMed:31855176). Simultaneous knockdown of kinesin-13 and the ventral disk median body protein (MBP) by the CRISPRi system has both longer caudal flagella and structurally defective ventral disk (PubMed:30379614).</text>
</comment>
<comment type="similarity">
    <text evidence="11">Belongs to the TRAFAC class myosin-kinesin ATPase superfamily. Kinesin family. KIN-13 subfamily.</text>
</comment>
<comment type="caution">
    <text evidence="5 7">According to PubMed:31855176 localizes to flagellar pores in interphase (PubMed:31855176). According to PubMed:17766466 is not detected at the flagellar pores (PubMed:17766466).</text>
</comment>
<proteinExistence type="evidence at protein level"/>
<accession>E2RTQ2</accession>
<accession>A8B2F2</accession>
<accession>Q06Z47</accession>
<organism evidence="13">
    <name type="scientific">Giardia intestinalis (strain ATCC 50803 / WB clone C6)</name>
    <name type="common">Giardia lamblia</name>
    <dbReference type="NCBI Taxonomy" id="184922"/>
    <lineage>
        <taxon>Eukaryota</taxon>
        <taxon>Metamonada</taxon>
        <taxon>Diplomonadida</taxon>
        <taxon>Hexamitidae</taxon>
        <taxon>Giardiinae</taxon>
        <taxon>Giardia</taxon>
    </lineage>
</organism>
<keyword id="KW-0067">ATP-binding</keyword>
<keyword id="KW-0131">Cell cycle</keyword>
<keyword id="KW-0132">Cell division</keyword>
<keyword id="KW-0966">Cell projection</keyword>
<keyword id="KW-0137">Centromere</keyword>
<keyword id="KW-0158">Chromosome</keyword>
<keyword id="KW-0969">Cilium</keyword>
<keyword id="KW-0970">Cilium biogenesis/degradation</keyword>
<keyword id="KW-0963">Cytoplasm</keyword>
<keyword id="KW-0206">Cytoskeleton</keyword>
<keyword id="KW-0282">Flagellum</keyword>
<keyword id="KW-0995">Kinetochore</keyword>
<keyword id="KW-0493">Microtubule</keyword>
<keyword id="KW-0498">Mitosis</keyword>
<keyword id="KW-0505">Motor protein</keyword>
<keyword id="KW-0547">Nucleotide-binding</keyword>
<keyword id="KW-0597">Phosphoprotein</keyword>
<keyword id="KW-1185">Reference proteome</keyword>
<sequence length="714" mass="79667">MSDLVYQWLESANLQQYYPAFEQQGITPQRFITITIQDYGALGIQALPDKQKLFRLITTLKSRENILEQQPSAPNTGATPQSVPSSHVSPHVAQGDRFVGDKQKQNDIQQAQDMSLYESYDGGYEPPYVSAQGSGPANGDDYVIPTIPYHPNAPNPPNPRGIPTVNRTVVPPVDLFLNQIQSRIRVVIRKRPINPKELSQNQRDVVTADGWNQVSIHEPKVKVDLTKYTDLHTFKFDHVFNEQSDNQEIYQYAAKPLIRSVFEGKNCTVFAYGQTGSGKSFTMMHKDNGIYVLACFDILEYLRVYNGSQGNNSKFLVPVVSFFEIYGGKLFDLLNNRQRLQALEDGKGNVQITGLTEKQISSVDAMLNLIDSGLTLRAVGATGANADSSRSHAILQIALKYTKSGKEYSRISFIDLAGSERASDVQNSDRQTRMEGAEINKSLLALKECIRAMDKSNDSKSGAHIPFRGSKLTMVLRDSFIGNSQTVMIANISPNDKSCDNTLNTLRYADRVKELQHGKGGIIKFNVLKMGQNAADVILGTARDDENDVYKAGIVGVNAAPSQQARVPPASQAPITARQIQQNLPQPHYNPNYNPPNSKPAFEPRVETTDEDDMVRTHCDLVDSIYEQEDLIVRAHRRQVDSMMQLVKEEVALLHAIENDQVSIDDWLVKLSDILSRKEEAITTLKGNLSAFKQALQKEEELSHSIDLNKARKK</sequence>
<name>KIN13_GIAIC</name>
<gene>
    <name evidence="11" type="primary">kin-13</name>
    <name evidence="11" type="synonym">klp13</name>
    <name evidence="14" type="ORF">GL50803_0016945</name>
    <name evidence="13" type="ORF">GL50803_16945</name>
</gene>
<dbReference type="EMBL" id="DQ395239">
    <property type="protein sequence ID" value="ABD60079.1"/>
    <property type="molecule type" value="Genomic_DNA"/>
</dbReference>
<dbReference type="EMBL" id="AACB02000001">
    <property type="protein sequence ID" value="EDO82285.1"/>
    <property type="molecule type" value="Genomic_DNA"/>
</dbReference>
<dbReference type="EMBL" id="AACB03000003">
    <property type="protein sequence ID" value="KAE8302965.1"/>
    <property type="molecule type" value="Genomic_DNA"/>
</dbReference>
<dbReference type="RefSeq" id="XP_001709959.1">
    <property type="nucleotide sequence ID" value="XM_001709907.1"/>
</dbReference>
<dbReference type="SMR" id="E2RTQ2"/>
<dbReference type="STRING" id="184922.E2RTQ2"/>
<dbReference type="EnsemblProtists" id="EDO82285">
    <property type="protein sequence ID" value="EDO82285"/>
    <property type="gene ID" value="GL50803_16945"/>
</dbReference>
<dbReference type="GeneID" id="5702883"/>
<dbReference type="KEGG" id="gla:GL50803_0016945"/>
<dbReference type="VEuPathDB" id="GiardiaDB:DHA2_16945"/>
<dbReference type="VEuPathDB" id="GiardiaDB:GL50581_4050"/>
<dbReference type="VEuPathDB" id="GiardiaDB:GL50803_0016945"/>
<dbReference type="VEuPathDB" id="GiardiaDB:GL50803_16945"/>
<dbReference type="VEuPathDB" id="GiardiaDB:QR46_1315"/>
<dbReference type="HOGENOM" id="CLU_001485_19_2_1"/>
<dbReference type="InParanoid" id="E2RTQ2"/>
<dbReference type="OMA" id="PFIPKEM"/>
<dbReference type="OrthoDB" id="3176171at2759"/>
<dbReference type="Proteomes" id="UP000001548">
    <property type="component" value="Chromosome 3"/>
</dbReference>
<dbReference type="GO" id="GO:0097729">
    <property type="term" value="C:9+2 motile cilium"/>
    <property type="evidence" value="ECO:0000314"/>
    <property type="project" value="UniProtKB"/>
</dbReference>
<dbReference type="GO" id="GO:0005930">
    <property type="term" value="C:axoneme"/>
    <property type="evidence" value="ECO:0000314"/>
    <property type="project" value="UniProtKB"/>
</dbReference>
<dbReference type="GO" id="GO:0036064">
    <property type="term" value="C:ciliary basal body"/>
    <property type="evidence" value="ECO:0000250"/>
    <property type="project" value="UniProtKB"/>
</dbReference>
<dbReference type="GO" id="GO:0000776">
    <property type="term" value="C:kinetochore"/>
    <property type="evidence" value="ECO:0000314"/>
    <property type="project" value="UniProtKB"/>
</dbReference>
<dbReference type="GO" id="GO:0097568">
    <property type="term" value="C:median body"/>
    <property type="evidence" value="ECO:0000314"/>
    <property type="project" value="UniProtKB"/>
</dbReference>
<dbReference type="GO" id="GO:0005874">
    <property type="term" value="C:microtubule"/>
    <property type="evidence" value="ECO:0000318"/>
    <property type="project" value="GO_Central"/>
</dbReference>
<dbReference type="GO" id="GO:0005819">
    <property type="term" value="C:spindle"/>
    <property type="evidence" value="ECO:0000314"/>
    <property type="project" value="UniProtKB"/>
</dbReference>
<dbReference type="GO" id="GO:0097597">
    <property type="term" value="C:ventral disc"/>
    <property type="evidence" value="ECO:0000314"/>
    <property type="project" value="UniProtKB"/>
</dbReference>
<dbReference type="GO" id="GO:0005524">
    <property type="term" value="F:ATP binding"/>
    <property type="evidence" value="ECO:0007669"/>
    <property type="project" value="UniProtKB-KW"/>
</dbReference>
<dbReference type="GO" id="GO:0008017">
    <property type="term" value="F:microtubule binding"/>
    <property type="evidence" value="ECO:0007669"/>
    <property type="project" value="InterPro"/>
</dbReference>
<dbReference type="GO" id="GO:0003777">
    <property type="term" value="F:microtubule motor activity"/>
    <property type="evidence" value="ECO:0000318"/>
    <property type="project" value="GO_Central"/>
</dbReference>
<dbReference type="GO" id="GO:0060404">
    <property type="term" value="P:axonemal microtubule depolymerization"/>
    <property type="evidence" value="ECO:0000314"/>
    <property type="project" value="UniProtKB"/>
</dbReference>
<dbReference type="GO" id="GO:0000902">
    <property type="term" value="P:cell morphogenesis"/>
    <property type="evidence" value="ECO:0000315"/>
    <property type="project" value="UniProtKB"/>
</dbReference>
<dbReference type="GO" id="GO:0007019">
    <property type="term" value="P:microtubule depolymerization"/>
    <property type="evidence" value="ECO:0000318"/>
    <property type="project" value="GO_Central"/>
</dbReference>
<dbReference type="GO" id="GO:0007018">
    <property type="term" value="P:microtubule-based movement"/>
    <property type="evidence" value="ECO:0007669"/>
    <property type="project" value="InterPro"/>
</dbReference>
<dbReference type="GO" id="GO:0000278">
    <property type="term" value="P:mitotic cell cycle"/>
    <property type="evidence" value="ECO:0000314"/>
    <property type="project" value="UniProtKB"/>
</dbReference>
<dbReference type="GO" id="GO:0000281">
    <property type="term" value="P:mitotic cytokinesis"/>
    <property type="evidence" value="ECO:0000315"/>
    <property type="project" value="UniProtKB"/>
</dbReference>
<dbReference type="GO" id="GO:1990755">
    <property type="term" value="P:mitotic spindle microtubule depolymerization"/>
    <property type="evidence" value="ECO:0000315"/>
    <property type="project" value="UniProtKB"/>
</dbReference>
<dbReference type="GO" id="GO:0070462">
    <property type="term" value="P:plus-end specific microtubule depolymerization"/>
    <property type="evidence" value="ECO:0000314"/>
    <property type="project" value="UniProtKB"/>
</dbReference>
<dbReference type="CDD" id="cd01367">
    <property type="entry name" value="KISc_KIF2_like"/>
    <property type="match status" value="1"/>
</dbReference>
<dbReference type="CDD" id="cd09541">
    <property type="entry name" value="SAM_KIF24-like"/>
    <property type="match status" value="1"/>
</dbReference>
<dbReference type="FunFam" id="3.40.850.10:FF:000012">
    <property type="entry name" value="Kinesin-like protein"/>
    <property type="match status" value="1"/>
</dbReference>
<dbReference type="Gene3D" id="3.40.850.10">
    <property type="entry name" value="Kinesin motor domain"/>
    <property type="match status" value="1"/>
</dbReference>
<dbReference type="Gene3D" id="1.10.150.50">
    <property type="entry name" value="Transcription Factor, Ets-1"/>
    <property type="match status" value="1"/>
</dbReference>
<dbReference type="InterPro" id="IPR027640">
    <property type="entry name" value="Kinesin-like_fam"/>
</dbReference>
<dbReference type="InterPro" id="IPR019821">
    <property type="entry name" value="Kinesin_motor_CS"/>
</dbReference>
<dbReference type="InterPro" id="IPR001752">
    <property type="entry name" value="Kinesin_motor_dom"/>
</dbReference>
<dbReference type="InterPro" id="IPR036961">
    <property type="entry name" value="Kinesin_motor_dom_sf"/>
</dbReference>
<dbReference type="InterPro" id="IPR027417">
    <property type="entry name" value="P-loop_NTPase"/>
</dbReference>
<dbReference type="InterPro" id="IPR001660">
    <property type="entry name" value="SAM"/>
</dbReference>
<dbReference type="InterPro" id="IPR013761">
    <property type="entry name" value="SAM/pointed_sf"/>
</dbReference>
<dbReference type="PANTHER" id="PTHR47971:SF8">
    <property type="entry name" value="KINESIN-LIKE PROTEIN"/>
    <property type="match status" value="1"/>
</dbReference>
<dbReference type="PANTHER" id="PTHR47971">
    <property type="entry name" value="KINESIN-RELATED PROTEIN 6"/>
    <property type="match status" value="1"/>
</dbReference>
<dbReference type="Pfam" id="PF00225">
    <property type="entry name" value="Kinesin"/>
    <property type="match status" value="1"/>
</dbReference>
<dbReference type="Pfam" id="PF00536">
    <property type="entry name" value="SAM_1"/>
    <property type="match status" value="1"/>
</dbReference>
<dbReference type="PRINTS" id="PR00380">
    <property type="entry name" value="KINESINHEAVY"/>
</dbReference>
<dbReference type="SMART" id="SM00129">
    <property type="entry name" value="KISc"/>
    <property type="match status" value="1"/>
</dbReference>
<dbReference type="SMART" id="SM00454">
    <property type="entry name" value="SAM"/>
    <property type="match status" value="1"/>
</dbReference>
<dbReference type="SUPFAM" id="SSF52540">
    <property type="entry name" value="P-loop containing nucleoside triphosphate hydrolases"/>
    <property type="match status" value="1"/>
</dbReference>
<dbReference type="SUPFAM" id="SSF47769">
    <property type="entry name" value="SAM/Pointed domain"/>
    <property type="match status" value="1"/>
</dbReference>
<dbReference type="PROSITE" id="PS00411">
    <property type="entry name" value="KINESIN_MOTOR_1"/>
    <property type="match status" value="1"/>
</dbReference>
<dbReference type="PROSITE" id="PS50067">
    <property type="entry name" value="KINESIN_MOTOR_2"/>
    <property type="match status" value="1"/>
</dbReference>
<dbReference type="PROSITE" id="PS50105">
    <property type="entry name" value="SAM_DOMAIN"/>
    <property type="match status" value="1"/>
</dbReference>